<name>KAD_ESCF3</name>
<proteinExistence type="inferred from homology"/>
<reference key="1">
    <citation type="journal article" date="2009" name="PLoS Genet.">
        <title>Organised genome dynamics in the Escherichia coli species results in highly diverse adaptive paths.</title>
        <authorList>
            <person name="Touchon M."/>
            <person name="Hoede C."/>
            <person name="Tenaillon O."/>
            <person name="Barbe V."/>
            <person name="Baeriswyl S."/>
            <person name="Bidet P."/>
            <person name="Bingen E."/>
            <person name="Bonacorsi S."/>
            <person name="Bouchier C."/>
            <person name="Bouvet O."/>
            <person name="Calteau A."/>
            <person name="Chiapello H."/>
            <person name="Clermont O."/>
            <person name="Cruveiller S."/>
            <person name="Danchin A."/>
            <person name="Diard M."/>
            <person name="Dossat C."/>
            <person name="Karoui M.E."/>
            <person name="Frapy E."/>
            <person name="Garry L."/>
            <person name="Ghigo J.M."/>
            <person name="Gilles A.M."/>
            <person name="Johnson J."/>
            <person name="Le Bouguenec C."/>
            <person name="Lescat M."/>
            <person name="Mangenot S."/>
            <person name="Martinez-Jehanne V."/>
            <person name="Matic I."/>
            <person name="Nassif X."/>
            <person name="Oztas S."/>
            <person name="Petit M.A."/>
            <person name="Pichon C."/>
            <person name="Rouy Z."/>
            <person name="Ruf C.S."/>
            <person name="Schneider D."/>
            <person name="Tourret J."/>
            <person name="Vacherie B."/>
            <person name="Vallenet D."/>
            <person name="Medigue C."/>
            <person name="Rocha E.P.C."/>
            <person name="Denamur E."/>
        </authorList>
    </citation>
    <scope>NUCLEOTIDE SEQUENCE [LARGE SCALE GENOMIC DNA]</scope>
    <source>
        <strain>ATCC 35469 / DSM 13698 / BCRC 15582 / CCUG 18766 / IAM 14443 / JCM 21226 / LMG 7866 / NBRC 102419 / NCTC 12128 / CDC 0568-73</strain>
    </source>
</reference>
<gene>
    <name evidence="2" type="primary">adk</name>
    <name type="ordered locus">EFER_0523</name>
</gene>
<comment type="function">
    <text evidence="2">Catalyzes the reversible transfer of the terminal phosphate group between ATP and AMP. Plays an important role in cellular energy homeostasis and in adenine nucleotide metabolism.</text>
</comment>
<comment type="catalytic activity">
    <reaction evidence="2">
        <text>AMP + ATP = 2 ADP</text>
        <dbReference type="Rhea" id="RHEA:12973"/>
        <dbReference type="ChEBI" id="CHEBI:30616"/>
        <dbReference type="ChEBI" id="CHEBI:456215"/>
        <dbReference type="ChEBI" id="CHEBI:456216"/>
        <dbReference type="EC" id="2.7.4.3"/>
    </reaction>
</comment>
<comment type="pathway">
    <text evidence="2">Purine metabolism; AMP biosynthesis via salvage pathway; AMP from ADP: step 1/1.</text>
</comment>
<comment type="subunit">
    <text evidence="2">Monomer.</text>
</comment>
<comment type="subcellular location">
    <subcellularLocation>
        <location evidence="2">Cytoplasm</location>
    </subcellularLocation>
</comment>
<comment type="domain">
    <text evidence="2">Consists of three domains, a large central CORE domain and two small peripheral domains, NMPbind and LID, which undergo movements during catalysis. The LID domain closes over the site of phosphoryl transfer upon ATP binding. Assembling and dissambling the active center during each catalytic cycle provides an effective means to prevent ATP hydrolysis.</text>
</comment>
<comment type="similarity">
    <text evidence="2">Belongs to the adenylate kinase family.</text>
</comment>
<evidence type="ECO:0000250" key="1"/>
<evidence type="ECO:0000255" key="2">
    <source>
        <dbReference type="HAMAP-Rule" id="MF_00235"/>
    </source>
</evidence>
<dbReference type="EC" id="2.7.4.3" evidence="2"/>
<dbReference type="EMBL" id="CU928158">
    <property type="protein sequence ID" value="CAQ88071.1"/>
    <property type="molecule type" value="Genomic_DNA"/>
</dbReference>
<dbReference type="RefSeq" id="WP_001220233.1">
    <property type="nucleotide sequence ID" value="NC_011740.1"/>
</dbReference>
<dbReference type="SMR" id="B7LV13"/>
<dbReference type="GeneID" id="75170492"/>
<dbReference type="KEGG" id="efe:EFER_0523"/>
<dbReference type="HOGENOM" id="CLU_032354_1_2_6"/>
<dbReference type="UniPathway" id="UPA00588">
    <property type="reaction ID" value="UER00649"/>
</dbReference>
<dbReference type="Proteomes" id="UP000000745">
    <property type="component" value="Chromosome"/>
</dbReference>
<dbReference type="GO" id="GO:0005737">
    <property type="term" value="C:cytoplasm"/>
    <property type="evidence" value="ECO:0007669"/>
    <property type="project" value="UniProtKB-SubCell"/>
</dbReference>
<dbReference type="GO" id="GO:0004017">
    <property type="term" value="F:adenylate kinase activity"/>
    <property type="evidence" value="ECO:0007669"/>
    <property type="project" value="UniProtKB-UniRule"/>
</dbReference>
<dbReference type="GO" id="GO:0005524">
    <property type="term" value="F:ATP binding"/>
    <property type="evidence" value="ECO:0007669"/>
    <property type="project" value="UniProtKB-UniRule"/>
</dbReference>
<dbReference type="GO" id="GO:0044209">
    <property type="term" value="P:AMP salvage"/>
    <property type="evidence" value="ECO:0007669"/>
    <property type="project" value="UniProtKB-UniRule"/>
</dbReference>
<dbReference type="CDD" id="cd01428">
    <property type="entry name" value="ADK"/>
    <property type="match status" value="1"/>
</dbReference>
<dbReference type="FunFam" id="3.40.50.300:FF:000106">
    <property type="entry name" value="Adenylate kinase mitochondrial"/>
    <property type="match status" value="1"/>
</dbReference>
<dbReference type="Gene3D" id="3.40.50.300">
    <property type="entry name" value="P-loop containing nucleotide triphosphate hydrolases"/>
    <property type="match status" value="1"/>
</dbReference>
<dbReference type="HAMAP" id="MF_00235">
    <property type="entry name" value="Adenylate_kinase_Adk"/>
    <property type="match status" value="1"/>
</dbReference>
<dbReference type="InterPro" id="IPR006259">
    <property type="entry name" value="Adenyl_kin_sub"/>
</dbReference>
<dbReference type="InterPro" id="IPR000850">
    <property type="entry name" value="Adenylat/UMP-CMP_kin"/>
</dbReference>
<dbReference type="InterPro" id="IPR033690">
    <property type="entry name" value="Adenylat_kinase_CS"/>
</dbReference>
<dbReference type="InterPro" id="IPR007862">
    <property type="entry name" value="Adenylate_kinase_lid-dom"/>
</dbReference>
<dbReference type="InterPro" id="IPR027417">
    <property type="entry name" value="P-loop_NTPase"/>
</dbReference>
<dbReference type="NCBIfam" id="TIGR01351">
    <property type="entry name" value="adk"/>
    <property type="match status" value="1"/>
</dbReference>
<dbReference type="NCBIfam" id="NF001379">
    <property type="entry name" value="PRK00279.1-1"/>
    <property type="match status" value="1"/>
</dbReference>
<dbReference type="NCBIfam" id="NF001380">
    <property type="entry name" value="PRK00279.1-2"/>
    <property type="match status" value="1"/>
</dbReference>
<dbReference type="NCBIfam" id="NF001381">
    <property type="entry name" value="PRK00279.1-3"/>
    <property type="match status" value="1"/>
</dbReference>
<dbReference type="NCBIfam" id="NF011100">
    <property type="entry name" value="PRK14527.1"/>
    <property type="match status" value="1"/>
</dbReference>
<dbReference type="PANTHER" id="PTHR23359">
    <property type="entry name" value="NUCLEOTIDE KINASE"/>
    <property type="match status" value="1"/>
</dbReference>
<dbReference type="Pfam" id="PF00406">
    <property type="entry name" value="ADK"/>
    <property type="match status" value="1"/>
</dbReference>
<dbReference type="Pfam" id="PF05191">
    <property type="entry name" value="ADK_lid"/>
    <property type="match status" value="1"/>
</dbReference>
<dbReference type="PRINTS" id="PR00094">
    <property type="entry name" value="ADENYLTKNASE"/>
</dbReference>
<dbReference type="SUPFAM" id="SSF52540">
    <property type="entry name" value="P-loop containing nucleoside triphosphate hydrolases"/>
    <property type="match status" value="1"/>
</dbReference>
<dbReference type="PROSITE" id="PS00113">
    <property type="entry name" value="ADENYLATE_KINASE"/>
    <property type="match status" value="1"/>
</dbReference>
<organism>
    <name type="scientific">Escherichia fergusonii (strain ATCC 35469 / DSM 13698 / CCUG 18766 / IAM 14443 / JCM 21226 / LMG 7866 / NBRC 102419 / NCTC 12128 / CDC 0568-73)</name>
    <dbReference type="NCBI Taxonomy" id="585054"/>
    <lineage>
        <taxon>Bacteria</taxon>
        <taxon>Pseudomonadati</taxon>
        <taxon>Pseudomonadota</taxon>
        <taxon>Gammaproteobacteria</taxon>
        <taxon>Enterobacterales</taxon>
        <taxon>Enterobacteriaceae</taxon>
        <taxon>Escherichia</taxon>
    </lineage>
</organism>
<feature type="chain" id="PRO_1000191149" description="Adenylate kinase">
    <location>
        <begin position="1"/>
        <end position="214"/>
    </location>
</feature>
<feature type="region of interest" description="NMP" evidence="2">
    <location>
        <begin position="30"/>
        <end position="59"/>
    </location>
</feature>
<feature type="region of interest" description="LID">
    <location>
        <begin position="122"/>
        <end position="159"/>
    </location>
</feature>
<feature type="binding site" evidence="2">
    <location>
        <begin position="10"/>
        <end position="15"/>
    </location>
    <ligand>
        <name>ATP</name>
        <dbReference type="ChEBI" id="CHEBI:30616"/>
    </ligand>
</feature>
<feature type="binding site" evidence="2">
    <location>
        <position position="31"/>
    </location>
    <ligand>
        <name>AMP</name>
        <dbReference type="ChEBI" id="CHEBI:456215"/>
    </ligand>
</feature>
<feature type="binding site" evidence="2">
    <location>
        <position position="36"/>
    </location>
    <ligand>
        <name>AMP</name>
        <dbReference type="ChEBI" id="CHEBI:456215"/>
    </ligand>
</feature>
<feature type="binding site" evidence="2">
    <location>
        <begin position="57"/>
        <end position="59"/>
    </location>
    <ligand>
        <name>AMP</name>
        <dbReference type="ChEBI" id="CHEBI:456215"/>
    </ligand>
</feature>
<feature type="binding site" evidence="2">
    <location>
        <begin position="85"/>
        <end position="88"/>
    </location>
    <ligand>
        <name>AMP</name>
        <dbReference type="ChEBI" id="CHEBI:456215"/>
    </ligand>
</feature>
<feature type="binding site" evidence="2">
    <location>
        <position position="92"/>
    </location>
    <ligand>
        <name>AMP</name>
        <dbReference type="ChEBI" id="CHEBI:456215"/>
    </ligand>
</feature>
<feature type="binding site" evidence="2">
    <location>
        <position position="123"/>
    </location>
    <ligand>
        <name>ATP</name>
        <dbReference type="ChEBI" id="CHEBI:30616"/>
    </ligand>
</feature>
<feature type="binding site" evidence="2">
    <location>
        <begin position="132"/>
        <end position="133"/>
    </location>
    <ligand>
        <name>ATP</name>
        <dbReference type="ChEBI" id="CHEBI:30616"/>
    </ligand>
</feature>
<feature type="binding site" evidence="2">
    <location>
        <position position="156"/>
    </location>
    <ligand>
        <name>AMP</name>
        <dbReference type="ChEBI" id="CHEBI:456215"/>
    </ligand>
</feature>
<feature type="binding site" evidence="2">
    <location>
        <position position="167"/>
    </location>
    <ligand>
        <name>AMP</name>
        <dbReference type="ChEBI" id="CHEBI:456215"/>
    </ligand>
</feature>
<feature type="binding site" evidence="2">
    <location>
        <position position="200"/>
    </location>
    <ligand>
        <name>ATP</name>
        <dbReference type="ChEBI" id="CHEBI:30616"/>
    </ligand>
</feature>
<feature type="modified residue" description="N6-acetyllysine" evidence="1">
    <location>
        <position position="192"/>
    </location>
</feature>
<accession>B7LV13</accession>
<keyword id="KW-0007">Acetylation</keyword>
<keyword id="KW-0067">ATP-binding</keyword>
<keyword id="KW-0963">Cytoplasm</keyword>
<keyword id="KW-0418">Kinase</keyword>
<keyword id="KW-0545">Nucleotide biosynthesis</keyword>
<keyword id="KW-0547">Nucleotide-binding</keyword>
<keyword id="KW-0808">Transferase</keyword>
<protein>
    <recommendedName>
        <fullName evidence="2">Adenylate kinase</fullName>
        <shortName evidence="2">AK</shortName>
        <ecNumber evidence="2">2.7.4.3</ecNumber>
    </recommendedName>
    <alternativeName>
        <fullName evidence="2">ATP-AMP transphosphorylase</fullName>
    </alternativeName>
    <alternativeName>
        <fullName evidence="2">ATP:AMP phosphotransferase</fullName>
    </alternativeName>
    <alternativeName>
        <fullName evidence="2">Adenylate monophosphate kinase</fullName>
    </alternativeName>
</protein>
<sequence>MRIILLGAPGAGKGTQAQFIMEKYGIPQISTGDMLRAAVKSGSELGKQAKDIMDAGKLVTDELVIALVKERIAQEDCRNGFLLDGFPRTIPQADAMKEAGINVDYVLEFDVPDELIVDRIVGRRVHAPSGRVYHVKFNPPKVEGKDDVTGEELTTRKDDQEETVRKRLVEYHQMTAPLIGYYSKEAEAGNTKYAKVDGTKPVAEVRADLEKILG</sequence>